<dbReference type="EMBL" id="Z68308">
    <property type="protein sequence ID" value="CAA92650.1"/>
    <property type="molecule type" value="mRNA"/>
</dbReference>
<dbReference type="RefSeq" id="NP_001094389.1">
    <molecule id="Q28570-1"/>
    <property type="nucleotide sequence ID" value="NM_001100919.3"/>
</dbReference>
<dbReference type="RefSeq" id="XP_027829755.1">
    <molecule id="Q28570-1"/>
    <property type="nucleotide sequence ID" value="XM_027973954.2"/>
</dbReference>
<dbReference type="SMR" id="Q28570"/>
<dbReference type="STRING" id="9940.ENSOARP00000013803"/>
<dbReference type="PaxDb" id="9940-ENSOARP00000013803"/>
<dbReference type="Ensembl" id="ENSOART00180051299">
    <molecule id="Q28570-1"/>
    <property type="protein sequence ID" value="ENSOARP00180026643"/>
    <property type="gene ID" value="ENSOARG00180030799"/>
</dbReference>
<dbReference type="Ensembl" id="ENSOART00185044159">
    <molecule id="Q28570-1"/>
    <property type="protein sequence ID" value="ENSOARP00185021872"/>
    <property type="gene ID" value="ENSOARG00185026752"/>
</dbReference>
<dbReference type="Ensembl" id="ENSOART00215039712">
    <molecule id="Q28570-1"/>
    <property type="protein sequence ID" value="ENSOARP00215020397"/>
    <property type="gene ID" value="ENSOARG00215023922"/>
</dbReference>
<dbReference type="Ensembl" id="ENSOART00220047282">
    <molecule id="Q28570-1"/>
    <property type="protein sequence ID" value="ENSOARP00220025508"/>
    <property type="gene ID" value="ENSOARG00220028275"/>
</dbReference>
<dbReference type="Ensembl" id="ENSOART00225048572">
    <molecule id="Q28570-1"/>
    <property type="protein sequence ID" value="ENSOARP00225024345"/>
    <property type="gene ID" value="ENSOARG00225029386"/>
</dbReference>
<dbReference type="GeneID" id="443446"/>
<dbReference type="KEGG" id="oas:443446"/>
<dbReference type="CTD" id="7067"/>
<dbReference type="eggNOG" id="KOG3575">
    <property type="taxonomic scope" value="Eukaryota"/>
</dbReference>
<dbReference type="OrthoDB" id="6081310at2759"/>
<dbReference type="Proteomes" id="UP000002356">
    <property type="component" value="Unplaced"/>
</dbReference>
<dbReference type="GO" id="GO:0005737">
    <property type="term" value="C:cytoplasm"/>
    <property type="evidence" value="ECO:0007669"/>
    <property type="project" value="UniProtKB-SubCell"/>
</dbReference>
<dbReference type="GO" id="GO:0090575">
    <property type="term" value="C:RNA polymerase II transcription regulator complex"/>
    <property type="evidence" value="ECO:0007669"/>
    <property type="project" value="TreeGrafter"/>
</dbReference>
<dbReference type="GO" id="GO:0004879">
    <property type="term" value="F:nuclear receptor activity"/>
    <property type="evidence" value="ECO:0000250"/>
    <property type="project" value="UniProtKB"/>
</dbReference>
<dbReference type="GO" id="GO:0000978">
    <property type="term" value="F:RNA polymerase II cis-regulatory region sequence-specific DNA binding"/>
    <property type="evidence" value="ECO:0007669"/>
    <property type="project" value="TreeGrafter"/>
</dbReference>
<dbReference type="GO" id="GO:0070324">
    <property type="term" value="F:thyroid hormone binding"/>
    <property type="evidence" value="ECO:0000250"/>
    <property type="project" value="UniProtKB"/>
</dbReference>
<dbReference type="GO" id="GO:0008270">
    <property type="term" value="F:zinc ion binding"/>
    <property type="evidence" value="ECO:0007669"/>
    <property type="project" value="UniProtKB-KW"/>
</dbReference>
<dbReference type="GO" id="GO:0030154">
    <property type="term" value="P:cell differentiation"/>
    <property type="evidence" value="ECO:0007669"/>
    <property type="project" value="TreeGrafter"/>
</dbReference>
<dbReference type="GO" id="GO:0000122">
    <property type="term" value="P:negative regulation of transcription by RNA polymerase II"/>
    <property type="evidence" value="ECO:0007669"/>
    <property type="project" value="TreeGrafter"/>
</dbReference>
<dbReference type="GO" id="GO:0045944">
    <property type="term" value="P:positive regulation of transcription by RNA polymerase II"/>
    <property type="evidence" value="ECO:0007669"/>
    <property type="project" value="TreeGrafter"/>
</dbReference>
<dbReference type="GO" id="GO:0048384">
    <property type="term" value="P:retinoic acid receptor signaling pathway"/>
    <property type="evidence" value="ECO:0007669"/>
    <property type="project" value="TreeGrafter"/>
</dbReference>
<dbReference type="GO" id="GO:0002154">
    <property type="term" value="P:thyroid hormone receptor signaling pathway"/>
    <property type="evidence" value="ECO:0007669"/>
    <property type="project" value="TreeGrafter"/>
</dbReference>
<dbReference type="CDD" id="cd06961">
    <property type="entry name" value="NR_DBD_TR"/>
    <property type="match status" value="1"/>
</dbReference>
<dbReference type="CDD" id="cd06935">
    <property type="entry name" value="NR_LBD_TR"/>
    <property type="match status" value="1"/>
</dbReference>
<dbReference type="FunFam" id="1.10.565.10:FF:000006">
    <property type="entry name" value="Thyroid hormone receptor beta 2"/>
    <property type="match status" value="1"/>
</dbReference>
<dbReference type="FunFam" id="3.30.50.10:FF:000011">
    <property type="entry name" value="Thyroid hormone receptor beta isoform"/>
    <property type="match status" value="1"/>
</dbReference>
<dbReference type="Gene3D" id="3.30.50.10">
    <property type="entry name" value="Erythroid Transcription Factor GATA-1, subunit A"/>
    <property type="match status" value="1"/>
</dbReference>
<dbReference type="Gene3D" id="1.10.565.10">
    <property type="entry name" value="Retinoid X Receptor"/>
    <property type="match status" value="1"/>
</dbReference>
<dbReference type="InterPro" id="IPR035500">
    <property type="entry name" value="NHR-like_dom_sf"/>
</dbReference>
<dbReference type="InterPro" id="IPR000536">
    <property type="entry name" value="Nucl_hrmn_rcpt_lig-bd"/>
</dbReference>
<dbReference type="InterPro" id="IPR050234">
    <property type="entry name" value="Nuclear_hormone_rcpt_NR1"/>
</dbReference>
<dbReference type="InterPro" id="IPR001723">
    <property type="entry name" value="Nuclear_hrmn_rcpt"/>
</dbReference>
<dbReference type="InterPro" id="IPR001728">
    <property type="entry name" value="ThyrH_rcpt"/>
</dbReference>
<dbReference type="InterPro" id="IPR001628">
    <property type="entry name" value="Znf_hrmn_rcpt"/>
</dbReference>
<dbReference type="InterPro" id="IPR013088">
    <property type="entry name" value="Znf_NHR/GATA"/>
</dbReference>
<dbReference type="PANTHER" id="PTHR24082">
    <property type="entry name" value="NUCLEAR HORMONE RECEPTOR"/>
    <property type="match status" value="1"/>
</dbReference>
<dbReference type="PANTHER" id="PTHR24082:SF42">
    <property type="entry name" value="THYROID HORMONE RECEPTOR ALPHA"/>
    <property type="match status" value="1"/>
</dbReference>
<dbReference type="Pfam" id="PF00104">
    <property type="entry name" value="Hormone_recep"/>
    <property type="match status" value="1"/>
</dbReference>
<dbReference type="Pfam" id="PF00105">
    <property type="entry name" value="zf-C4"/>
    <property type="match status" value="1"/>
</dbReference>
<dbReference type="PRINTS" id="PR00398">
    <property type="entry name" value="STRDHORMONER"/>
</dbReference>
<dbReference type="PRINTS" id="PR00047">
    <property type="entry name" value="STROIDFINGER"/>
</dbReference>
<dbReference type="PRINTS" id="PR00546">
    <property type="entry name" value="THYROIDHORMR"/>
</dbReference>
<dbReference type="SMART" id="SM00430">
    <property type="entry name" value="HOLI"/>
    <property type="match status" value="1"/>
</dbReference>
<dbReference type="SMART" id="SM00399">
    <property type="entry name" value="ZnF_C4"/>
    <property type="match status" value="1"/>
</dbReference>
<dbReference type="SUPFAM" id="SSF57716">
    <property type="entry name" value="Glucocorticoid receptor-like (DNA-binding domain)"/>
    <property type="match status" value="1"/>
</dbReference>
<dbReference type="SUPFAM" id="SSF48508">
    <property type="entry name" value="Nuclear receptor ligand-binding domain"/>
    <property type="match status" value="1"/>
</dbReference>
<dbReference type="PROSITE" id="PS51843">
    <property type="entry name" value="NR_LBD"/>
    <property type="match status" value="1"/>
</dbReference>
<dbReference type="PROSITE" id="PS00031">
    <property type="entry name" value="NUCLEAR_REC_DBD_1"/>
    <property type="match status" value="1"/>
</dbReference>
<dbReference type="PROSITE" id="PS51030">
    <property type="entry name" value="NUCLEAR_REC_DBD_2"/>
    <property type="match status" value="1"/>
</dbReference>
<name>THA_SHEEP</name>
<comment type="function">
    <text>Nuclear hormone receptor that can act as a repressor or activator of transcription. High affinity receptor for thyroid hormones, including triiodothyronine and thyroxine.</text>
</comment>
<comment type="subunit">
    <text evidence="1 2">Binds DNA as a dimer; homodimer and heterodimer with RXRB. Interacts with NCOA3 and NCOA6 coactivators, leading to a strong increase of transcription of target genes. Probably interacts with SFPQ. Interacts with C1D. Interacts with AKAP13. Interacts with TP53INP2. Interacts with PER2 (By similarity). Interacts with TACC1. The interaction with isoform alpha-1, but not alpha-2, is decreased in the presence of thyroid hormone T3 (By similarity).</text>
</comment>
<comment type="subcellular location">
    <subcellularLocation>
        <location>Nucleus</location>
    </subcellularLocation>
</comment>
<comment type="subcellular location">
    <molecule>Isoform Alpha-2</molecule>
    <subcellularLocation>
        <location evidence="4">Cytoplasm</location>
    </subcellularLocation>
    <subcellularLocation>
        <location evidence="4">Nucleus</location>
    </subcellularLocation>
</comment>
<comment type="alternative products">
    <event type="alternative splicing"/>
    <isoform>
        <id>Q28570-1</id>
        <name>Alpha-1</name>
        <sequence type="displayed"/>
    </isoform>
    <isoform>
        <id>Q28570-2</id>
        <name>Alpha-2</name>
        <sequence type="not described"/>
    </isoform>
</comment>
<comment type="domain">
    <text>Composed of three domains: a modulating N-terminal domain, a DNA-binding domain and a C-terminal ligand-binding domain.</text>
</comment>
<comment type="miscellaneous">
    <molecule>Isoform Alpha-2</molecule>
    <text evidence="8">Does not bind thyroid hormone T3.</text>
</comment>
<comment type="similarity">
    <text evidence="8">Belongs to the nuclear hormone receptor family. NR1 subfamily.</text>
</comment>
<gene>
    <name type="primary">THRA</name>
    <name type="synonym">NR1A1</name>
</gene>
<accession>Q28570</accession>
<keyword id="KW-0025">Alternative splicing</keyword>
<keyword id="KW-0963">Cytoplasm</keyword>
<keyword id="KW-0238">DNA-binding</keyword>
<keyword id="KW-0479">Metal-binding</keyword>
<keyword id="KW-0539">Nucleus</keyword>
<keyword id="KW-0675">Receptor</keyword>
<keyword id="KW-1185">Reference proteome</keyword>
<keyword id="KW-0804">Transcription</keyword>
<keyword id="KW-0805">Transcription regulation</keyword>
<keyword id="KW-0862">Zinc</keyword>
<keyword id="KW-0863">Zinc-finger</keyword>
<evidence type="ECO:0000250" key="1"/>
<evidence type="ECO:0000250" key="2">
    <source>
        <dbReference type="UniProtKB" id="P10827"/>
    </source>
</evidence>
<evidence type="ECO:0000250" key="3">
    <source>
        <dbReference type="UniProtKB" id="P10828"/>
    </source>
</evidence>
<evidence type="ECO:0000250" key="4">
    <source>
        <dbReference type="UniProtKB" id="P63058"/>
    </source>
</evidence>
<evidence type="ECO:0000255" key="5">
    <source>
        <dbReference type="PROSITE-ProRule" id="PRU00407"/>
    </source>
</evidence>
<evidence type="ECO:0000255" key="6">
    <source>
        <dbReference type="PROSITE-ProRule" id="PRU01189"/>
    </source>
</evidence>
<evidence type="ECO:0000256" key="7">
    <source>
        <dbReference type="SAM" id="MobiDB-lite"/>
    </source>
</evidence>
<evidence type="ECO:0000305" key="8"/>
<reference key="1">
    <citation type="journal article" date="1996" name="Thyroid">
        <title>Cloning of the alpha and beta ovine thyroid hormone receptor cDNAs.</title>
        <authorList>
            <person name="Tucker M.A."/>
            <person name="Polk D.H."/>
        </authorList>
    </citation>
    <scope>NUCLEOTIDE SEQUENCE [MRNA]</scope>
    <source>
        <tissue>Placenta</tissue>
    </source>
</reference>
<feature type="chain" id="PRO_0000053428" description="Thyroid hormone receptor alpha">
    <location>
        <begin position="1"/>
        <end position="410"/>
    </location>
</feature>
<feature type="domain" description="NR LBD" evidence="6">
    <location>
        <begin position="163"/>
        <end position="407"/>
    </location>
</feature>
<feature type="DNA-binding region" description="Nuclear receptor" evidence="5">
    <location>
        <begin position="53"/>
        <end position="127"/>
    </location>
</feature>
<feature type="zinc finger region" description="NR C4-type" evidence="5">
    <location>
        <begin position="53"/>
        <end position="73"/>
    </location>
</feature>
<feature type="zinc finger region" description="NR C4-type" evidence="5">
    <location>
        <begin position="91"/>
        <end position="115"/>
    </location>
</feature>
<feature type="region of interest" description="Modulating">
    <location>
        <begin position="1"/>
        <end position="52"/>
    </location>
</feature>
<feature type="region of interest" description="Disordered" evidence="7">
    <location>
        <begin position="1"/>
        <end position="32"/>
    </location>
</feature>
<feature type="binding site" evidence="3">
    <location>
        <position position="53"/>
    </location>
    <ligand>
        <name>Zn(2+)</name>
        <dbReference type="ChEBI" id="CHEBI:29105"/>
        <label>1</label>
    </ligand>
</feature>
<feature type="binding site" evidence="3">
    <location>
        <position position="56"/>
    </location>
    <ligand>
        <name>Zn(2+)</name>
        <dbReference type="ChEBI" id="CHEBI:29105"/>
        <label>1</label>
    </ligand>
</feature>
<feature type="binding site" evidence="3">
    <location>
        <position position="70"/>
    </location>
    <ligand>
        <name>Zn(2+)</name>
        <dbReference type="ChEBI" id="CHEBI:29105"/>
        <label>1</label>
    </ligand>
</feature>
<feature type="binding site" evidence="3">
    <location>
        <position position="73"/>
    </location>
    <ligand>
        <name>Zn(2+)</name>
        <dbReference type="ChEBI" id="CHEBI:29105"/>
        <label>1</label>
    </ligand>
</feature>
<feature type="binding site" evidence="3">
    <location>
        <position position="91"/>
    </location>
    <ligand>
        <name>Zn(2+)</name>
        <dbReference type="ChEBI" id="CHEBI:29105"/>
        <label>2</label>
    </ligand>
</feature>
<feature type="binding site" evidence="3">
    <location>
        <position position="97"/>
    </location>
    <ligand>
        <name>Zn(2+)</name>
        <dbReference type="ChEBI" id="CHEBI:29105"/>
        <label>2</label>
    </ligand>
</feature>
<feature type="binding site" evidence="3">
    <location>
        <position position="107"/>
    </location>
    <ligand>
        <name>Zn(2+)</name>
        <dbReference type="ChEBI" id="CHEBI:29105"/>
        <label>2</label>
    </ligand>
</feature>
<feature type="binding site" evidence="3">
    <location>
        <position position="110"/>
    </location>
    <ligand>
        <name>Zn(2+)</name>
        <dbReference type="ChEBI" id="CHEBI:29105"/>
        <label>2</label>
    </ligand>
</feature>
<feature type="binding site" evidence="2">
    <location>
        <position position="228"/>
    </location>
    <ligand>
        <name>3,3',5-triiodo-L-thyronine</name>
        <dbReference type="ChEBI" id="CHEBI:533015"/>
    </ligand>
</feature>
<feature type="binding site" evidence="2">
    <location>
        <position position="277"/>
    </location>
    <ligand>
        <name>3,3',5-triiodo-L-thyronine</name>
        <dbReference type="ChEBI" id="CHEBI:533015"/>
    </ligand>
</feature>
<organism>
    <name type="scientific">Ovis aries</name>
    <name type="common">Sheep</name>
    <dbReference type="NCBI Taxonomy" id="9940"/>
    <lineage>
        <taxon>Eukaryota</taxon>
        <taxon>Metazoa</taxon>
        <taxon>Chordata</taxon>
        <taxon>Craniata</taxon>
        <taxon>Vertebrata</taxon>
        <taxon>Euteleostomi</taxon>
        <taxon>Mammalia</taxon>
        <taxon>Eutheria</taxon>
        <taxon>Laurasiatheria</taxon>
        <taxon>Artiodactyla</taxon>
        <taxon>Ruminantia</taxon>
        <taxon>Pecora</taxon>
        <taxon>Bovidae</taxon>
        <taxon>Caprinae</taxon>
        <taxon>Ovis</taxon>
    </lineage>
</organism>
<protein>
    <recommendedName>
        <fullName>Thyroid hormone receptor alpha</fullName>
    </recommendedName>
    <alternativeName>
        <fullName>Nuclear receptor subfamily 1 group A member 1</fullName>
    </alternativeName>
</protein>
<proteinExistence type="evidence at transcript level"/>
<sequence length="410" mass="46802">MEQKPSKVECGSDPEESSTRSPDGKRKRKNGQCSLKTSMSGYIPSYLDKDEQCVVCGDKATGYHYRCITCEGCKGFFRRTIQKNLHPTYSCKYDSCCVIDKITRNQCQLCRFKKCIAVGMAMDLVLDDSKRVAKRKLIEQNRERRRKEEMIRSLQQRPEPTPEEWDLIHVATEAHRSTNAQGSHWKQRRKFLPDDIGQSPIVSMPDGDKVDLEAFSEFTKIITPAITRVVDFAKKLPMFSELPCEDQIILLKGCCMEIMSLRAAVRYDPESDTLTLSGEMAVKREQLKNGGLGVVSDAIFELGKSLSAFNLDDTEVALLQAVLLMSTDRSGLLCVDKIEKSQEAYLLAFEHYVNHRKHNIPHFWPKLLMKVTDLRMIGACHASRFLHMKVECPTELFPPLFLEVFEDQEV</sequence>